<dbReference type="EMBL" id="CP000969">
    <property type="protein sequence ID" value="ACB09692.1"/>
    <property type="molecule type" value="Genomic_DNA"/>
</dbReference>
<dbReference type="RefSeq" id="WP_004081742.1">
    <property type="nucleotide sequence ID" value="NC_010483.1"/>
</dbReference>
<dbReference type="SMR" id="B1LBJ4"/>
<dbReference type="KEGG" id="trq:TRQ2_1348"/>
<dbReference type="HOGENOM" id="CLU_095424_4_1_0"/>
<dbReference type="Proteomes" id="UP000001687">
    <property type="component" value="Chromosome"/>
</dbReference>
<dbReference type="GO" id="GO:0022625">
    <property type="term" value="C:cytosolic large ribosomal subunit"/>
    <property type="evidence" value="ECO:0007669"/>
    <property type="project" value="TreeGrafter"/>
</dbReference>
<dbReference type="GO" id="GO:0003735">
    <property type="term" value="F:structural constituent of ribosome"/>
    <property type="evidence" value="ECO:0007669"/>
    <property type="project" value="InterPro"/>
</dbReference>
<dbReference type="GO" id="GO:0006412">
    <property type="term" value="P:translation"/>
    <property type="evidence" value="ECO:0007669"/>
    <property type="project" value="UniProtKB-UniRule"/>
</dbReference>
<dbReference type="FunFam" id="2.40.50.100:FF:000085">
    <property type="entry name" value="50S ribosomal protein L27"/>
    <property type="match status" value="1"/>
</dbReference>
<dbReference type="Gene3D" id="2.40.50.100">
    <property type="match status" value="1"/>
</dbReference>
<dbReference type="HAMAP" id="MF_00539">
    <property type="entry name" value="Ribosomal_bL27"/>
    <property type="match status" value="1"/>
</dbReference>
<dbReference type="InterPro" id="IPR001684">
    <property type="entry name" value="Ribosomal_bL27"/>
</dbReference>
<dbReference type="InterPro" id="IPR018261">
    <property type="entry name" value="Ribosomal_bL27_CS"/>
</dbReference>
<dbReference type="NCBIfam" id="TIGR00062">
    <property type="entry name" value="L27"/>
    <property type="match status" value="1"/>
</dbReference>
<dbReference type="PANTHER" id="PTHR15893:SF0">
    <property type="entry name" value="LARGE RIBOSOMAL SUBUNIT PROTEIN BL27M"/>
    <property type="match status" value="1"/>
</dbReference>
<dbReference type="PANTHER" id="PTHR15893">
    <property type="entry name" value="RIBOSOMAL PROTEIN L27"/>
    <property type="match status" value="1"/>
</dbReference>
<dbReference type="Pfam" id="PF01016">
    <property type="entry name" value="Ribosomal_L27"/>
    <property type="match status" value="1"/>
</dbReference>
<dbReference type="PRINTS" id="PR00063">
    <property type="entry name" value="RIBOSOMALL27"/>
</dbReference>
<dbReference type="SUPFAM" id="SSF110324">
    <property type="entry name" value="Ribosomal L27 protein-like"/>
    <property type="match status" value="1"/>
</dbReference>
<dbReference type="PROSITE" id="PS00831">
    <property type="entry name" value="RIBOSOMAL_L27"/>
    <property type="match status" value="1"/>
</dbReference>
<protein>
    <recommendedName>
        <fullName evidence="1">Large ribosomal subunit protein bL27</fullName>
    </recommendedName>
    <alternativeName>
        <fullName evidence="2">50S ribosomal protein L27</fullName>
    </alternativeName>
</protein>
<sequence>MAHKKSGGVAKNGRDSLPKYLGVKVGDGQIVKAGNILVRQRGTRFYPGKNVGMGRDFTLFALKDGRVKFETKNNKKYVSVYEE</sequence>
<name>RL27_THESQ</name>
<gene>
    <name evidence="1" type="primary">rpmA</name>
    <name type="ordered locus">TRQ2_1348</name>
</gene>
<evidence type="ECO:0000255" key="1">
    <source>
        <dbReference type="HAMAP-Rule" id="MF_00539"/>
    </source>
</evidence>
<evidence type="ECO:0000305" key="2"/>
<reference key="1">
    <citation type="journal article" date="2011" name="J. Bacteriol.">
        <title>Genome sequence of Thermotoga sp. strain RQ2, a hyperthermophilic bacterium isolated from a geothermally heated region of the seafloor near Ribeira Quente, the Azores.</title>
        <authorList>
            <person name="Swithers K.S."/>
            <person name="DiPippo J.L."/>
            <person name="Bruce D.C."/>
            <person name="Detter C."/>
            <person name="Tapia R."/>
            <person name="Han S."/>
            <person name="Saunders E."/>
            <person name="Goodwin L.A."/>
            <person name="Han J."/>
            <person name="Woyke T."/>
            <person name="Pitluck S."/>
            <person name="Pennacchio L."/>
            <person name="Nolan M."/>
            <person name="Mikhailova N."/>
            <person name="Lykidis A."/>
            <person name="Land M.L."/>
            <person name="Brettin T."/>
            <person name="Stetter K.O."/>
            <person name="Nelson K.E."/>
            <person name="Gogarten J.P."/>
            <person name="Noll K.M."/>
        </authorList>
    </citation>
    <scope>NUCLEOTIDE SEQUENCE [LARGE SCALE GENOMIC DNA]</scope>
    <source>
        <strain>RQ2</strain>
    </source>
</reference>
<accession>B1LBJ4</accession>
<comment type="similarity">
    <text evidence="1">Belongs to the bacterial ribosomal protein bL27 family.</text>
</comment>
<keyword id="KW-0687">Ribonucleoprotein</keyword>
<keyword id="KW-0689">Ribosomal protein</keyword>
<proteinExistence type="inferred from homology"/>
<organism>
    <name type="scientific">Thermotoga sp. (strain RQ2)</name>
    <dbReference type="NCBI Taxonomy" id="126740"/>
    <lineage>
        <taxon>Bacteria</taxon>
        <taxon>Thermotogati</taxon>
        <taxon>Thermotogota</taxon>
        <taxon>Thermotogae</taxon>
        <taxon>Thermotogales</taxon>
        <taxon>Thermotogaceae</taxon>
        <taxon>Thermotoga</taxon>
    </lineage>
</organism>
<feature type="chain" id="PRO_1000128821" description="Large ribosomal subunit protein bL27">
    <location>
        <begin position="1"/>
        <end position="83"/>
    </location>
</feature>